<proteinExistence type="inferred from homology"/>
<comment type="function">
    <text evidence="1">Catalyzes the attachment of serine to tRNA(Ser). Is also able to aminoacylate tRNA(Sec) with serine, to form the misacylated tRNA L-seryl-tRNA(Sec), which will be further converted into selenocysteinyl-tRNA(Sec).</text>
</comment>
<comment type="catalytic activity">
    <reaction evidence="1">
        <text>tRNA(Ser) + L-serine + ATP = L-seryl-tRNA(Ser) + AMP + diphosphate + H(+)</text>
        <dbReference type="Rhea" id="RHEA:12292"/>
        <dbReference type="Rhea" id="RHEA-COMP:9669"/>
        <dbReference type="Rhea" id="RHEA-COMP:9703"/>
        <dbReference type="ChEBI" id="CHEBI:15378"/>
        <dbReference type="ChEBI" id="CHEBI:30616"/>
        <dbReference type="ChEBI" id="CHEBI:33019"/>
        <dbReference type="ChEBI" id="CHEBI:33384"/>
        <dbReference type="ChEBI" id="CHEBI:78442"/>
        <dbReference type="ChEBI" id="CHEBI:78533"/>
        <dbReference type="ChEBI" id="CHEBI:456215"/>
        <dbReference type="EC" id="6.1.1.11"/>
    </reaction>
</comment>
<comment type="catalytic activity">
    <reaction evidence="1">
        <text>tRNA(Sec) + L-serine + ATP = L-seryl-tRNA(Sec) + AMP + diphosphate + H(+)</text>
        <dbReference type="Rhea" id="RHEA:42580"/>
        <dbReference type="Rhea" id="RHEA-COMP:9742"/>
        <dbReference type="Rhea" id="RHEA-COMP:10128"/>
        <dbReference type="ChEBI" id="CHEBI:15378"/>
        <dbReference type="ChEBI" id="CHEBI:30616"/>
        <dbReference type="ChEBI" id="CHEBI:33019"/>
        <dbReference type="ChEBI" id="CHEBI:33384"/>
        <dbReference type="ChEBI" id="CHEBI:78442"/>
        <dbReference type="ChEBI" id="CHEBI:78533"/>
        <dbReference type="ChEBI" id="CHEBI:456215"/>
        <dbReference type="EC" id="6.1.1.11"/>
    </reaction>
</comment>
<comment type="pathway">
    <text evidence="1">Aminoacyl-tRNA biosynthesis; selenocysteinyl-tRNA(Sec) biosynthesis; L-seryl-tRNA(Sec) from L-serine and tRNA(Sec): step 1/1.</text>
</comment>
<comment type="subunit">
    <text evidence="1">Homodimer. The tRNA molecule binds across the dimer.</text>
</comment>
<comment type="subcellular location">
    <subcellularLocation>
        <location evidence="1">Cytoplasm</location>
    </subcellularLocation>
</comment>
<comment type="domain">
    <text evidence="1">Consists of two distinct domains, a catalytic core and a N-terminal extension that is involved in tRNA binding.</text>
</comment>
<comment type="similarity">
    <text evidence="1">Belongs to the class-II aminoacyl-tRNA synthetase family. Type-1 seryl-tRNA synthetase subfamily.</text>
</comment>
<feature type="chain" id="PRO_1000019692" description="Serine--tRNA ligase">
    <location>
        <begin position="1"/>
        <end position="429"/>
    </location>
</feature>
<feature type="binding site" evidence="1">
    <location>
        <begin position="235"/>
        <end position="237"/>
    </location>
    <ligand>
        <name>L-serine</name>
        <dbReference type="ChEBI" id="CHEBI:33384"/>
    </ligand>
</feature>
<feature type="binding site" evidence="1">
    <location>
        <begin position="266"/>
        <end position="268"/>
    </location>
    <ligand>
        <name>ATP</name>
        <dbReference type="ChEBI" id="CHEBI:30616"/>
    </ligand>
</feature>
<feature type="binding site" evidence="1">
    <location>
        <position position="289"/>
    </location>
    <ligand>
        <name>L-serine</name>
        <dbReference type="ChEBI" id="CHEBI:33384"/>
    </ligand>
</feature>
<feature type="binding site" evidence="1">
    <location>
        <begin position="353"/>
        <end position="356"/>
    </location>
    <ligand>
        <name>ATP</name>
        <dbReference type="ChEBI" id="CHEBI:30616"/>
    </ligand>
</feature>
<feature type="binding site" evidence="1">
    <location>
        <position position="389"/>
    </location>
    <ligand>
        <name>L-serine</name>
        <dbReference type="ChEBI" id="CHEBI:33384"/>
    </ligand>
</feature>
<accession>A5UFR9</accession>
<protein>
    <recommendedName>
        <fullName evidence="1">Serine--tRNA ligase</fullName>
        <ecNumber evidence="1">6.1.1.11</ecNumber>
    </recommendedName>
    <alternativeName>
        <fullName evidence="1">Seryl-tRNA synthetase</fullName>
        <shortName evidence="1">SerRS</shortName>
    </alternativeName>
    <alternativeName>
        <fullName evidence="1">Seryl-tRNA(Ser/Sec) synthetase</fullName>
    </alternativeName>
</protein>
<evidence type="ECO:0000255" key="1">
    <source>
        <dbReference type="HAMAP-Rule" id="MF_00176"/>
    </source>
</evidence>
<gene>
    <name evidence="1" type="primary">serS</name>
    <name type="ordered locus">CGSHiGG_03125</name>
</gene>
<name>SYS_HAEIG</name>
<reference key="1">
    <citation type="journal article" date="2007" name="Genome Biol.">
        <title>Characterization and modeling of the Haemophilus influenzae core and supragenomes based on the complete genomic sequences of Rd and 12 clinical nontypeable strains.</title>
        <authorList>
            <person name="Hogg J.S."/>
            <person name="Hu F.Z."/>
            <person name="Janto B."/>
            <person name="Boissy R."/>
            <person name="Hayes J."/>
            <person name="Keefe R."/>
            <person name="Post J.C."/>
            <person name="Ehrlich G.D."/>
        </authorList>
    </citation>
    <scope>NUCLEOTIDE SEQUENCE [LARGE SCALE GENOMIC DNA]</scope>
    <source>
        <strain>PittGG</strain>
    </source>
</reference>
<keyword id="KW-0030">Aminoacyl-tRNA synthetase</keyword>
<keyword id="KW-0067">ATP-binding</keyword>
<keyword id="KW-0963">Cytoplasm</keyword>
<keyword id="KW-0436">Ligase</keyword>
<keyword id="KW-0547">Nucleotide-binding</keyword>
<keyword id="KW-0648">Protein biosynthesis</keyword>
<sequence>MIDPNLLRNNLAEVAEKLKVKRNFMLDTEKLTALEDQRKNLQVTTENLQAERNARSKAIGAAKARGEDIAPLLAEMDDMGNQLTEAKAQLDAVLAEINQIALSIPNLPADEVPLGKDDTENKEILRWGTPRTFDFEVKDHVTLGEEANGLDFAAGAKLTGARFAVMKGQIAKMHRALAQFMLDLHTEQHGYLETYVPYLVNHATLYGTGQLPKFGEDLFHTLALQGEQPYALIPTAEVPVTNLVRDVIIDEAELPIKMTAHTPCFRSEAGSYGRDTRGLIRMHQFDKVEMVQIVDPDKSMEALEELTGHAEKVLQLLNLPYRKVLLCTGDMGFGSCKTYDLEVWVPAQNTYREISSCSNMWDFQARRMQARCKAKGDKKTHLVHTLNGSGLAVGRTLVAVLENYQNADGSITVPEVLRPYMGGLDVIGK</sequence>
<organism>
    <name type="scientific">Haemophilus influenzae (strain PittGG)</name>
    <dbReference type="NCBI Taxonomy" id="374931"/>
    <lineage>
        <taxon>Bacteria</taxon>
        <taxon>Pseudomonadati</taxon>
        <taxon>Pseudomonadota</taxon>
        <taxon>Gammaproteobacteria</taxon>
        <taxon>Pasteurellales</taxon>
        <taxon>Pasteurellaceae</taxon>
        <taxon>Haemophilus</taxon>
    </lineage>
</organism>
<dbReference type="EC" id="6.1.1.11" evidence="1"/>
<dbReference type="EMBL" id="CP000672">
    <property type="protein sequence ID" value="ABQ99624.1"/>
    <property type="molecule type" value="Genomic_DNA"/>
</dbReference>
<dbReference type="SMR" id="A5UFR9"/>
<dbReference type="KEGG" id="hiq:CGSHiGG_03125"/>
<dbReference type="HOGENOM" id="CLU_023797_1_1_6"/>
<dbReference type="UniPathway" id="UPA00906">
    <property type="reaction ID" value="UER00895"/>
</dbReference>
<dbReference type="Proteomes" id="UP000001990">
    <property type="component" value="Chromosome"/>
</dbReference>
<dbReference type="GO" id="GO:0005737">
    <property type="term" value="C:cytoplasm"/>
    <property type="evidence" value="ECO:0007669"/>
    <property type="project" value="UniProtKB-SubCell"/>
</dbReference>
<dbReference type="GO" id="GO:0005524">
    <property type="term" value="F:ATP binding"/>
    <property type="evidence" value="ECO:0007669"/>
    <property type="project" value="UniProtKB-UniRule"/>
</dbReference>
<dbReference type="GO" id="GO:0004828">
    <property type="term" value="F:serine-tRNA ligase activity"/>
    <property type="evidence" value="ECO:0007669"/>
    <property type="project" value="UniProtKB-UniRule"/>
</dbReference>
<dbReference type="GO" id="GO:0016260">
    <property type="term" value="P:selenocysteine biosynthetic process"/>
    <property type="evidence" value="ECO:0007669"/>
    <property type="project" value="UniProtKB-UniRule"/>
</dbReference>
<dbReference type="GO" id="GO:0006434">
    <property type="term" value="P:seryl-tRNA aminoacylation"/>
    <property type="evidence" value="ECO:0007669"/>
    <property type="project" value="UniProtKB-UniRule"/>
</dbReference>
<dbReference type="CDD" id="cd00770">
    <property type="entry name" value="SerRS_core"/>
    <property type="match status" value="1"/>
</dbReference>
<dbReference type="FunFam" id="3.30.930.10:FF:000018">
    <property type="entry name" value="Serine--tRNA ligase"/>
    <property type="match status" value="1"/>
</dbReference>
<dbReference type="Gene3D" id="3.30.930.10">
    <property type="entry name" value="Bira Bifunctional Protein, Domain 2"/>
    <property type="match status" value="1"/>
</dbReference>
<dbReference type="Gene3D" id="1.10.287.40">
    <property type="entry name" value="Serine-tRNA synthetase, tRNA binding domain"/>
    <property type="match status" value="1"/>
</dbReference>
<dbReference type="HAMAP" id="MF_00176">
    <property type="entry name" value="Ser_tRNA_synth_type1"/>
    <property type="match status" value="1"/>
</dbReference>
<dbReference type="InterPro" id="IPR002314">
    <property type="entry name" value="aa-tRNA-synt_IIb"/>
</dbReference>
<dbReference type="InterPro" id="IPR006195">
    <property type="entry name" value="aa-tRNA-synth_II"/>
</dbReference>
<dbReference type="InterPro" id="IPR045864">
    <property type="entry name" value="aa-tRNA-synth_II/BPL/LPL"/>
</dbReference>
<dbReference type="InterPro" id="IPR002317">
    <property type="entry name" value="Ser-tRNA-ligase_type_1"/>
</dbReference>
<dbReference type="InterPro" id="IPR015866">
    <property type="entry name" value="Ser-tRNA-synth_1_N"/>
</dbReference>
<dbReference type="InterPro" id="IPR042103">
    <property type="entry name" value="SerRS_1_N_sf"/>
</dbReference>
<dbReference type="InterPro" id="IPR033729">
    <property type="entry name" value="SerRS_core"/>
</dbReference>
<dbReference type="InterPro" id="IPR010978">
    <property type="entry name" value="tRNA-bd_arm"/>
</dbReference>
<dbReference type="NCBIfam" id="TIGR00414">
    <property type="entry name" value="serS"/>
    <property type="match status" value="1"/>
</dbReference>
<dbReference type="PANTHER" id="PTHR43697:SF1">
    <property type="entry name" value="SERINE--TRNA LIGASE"/>
    <property type="match status" value="1"/>
</dbReference>
<dbReference type="PANTHER" id="PTHR43697">
    <property type="entry name" value="SERYL-TRNA SYNTHETASE"/>
    <property type="match status" value="1"/>
</dbReference>
<dbReference type="Pfam" id="PF02403">
    <property type="entry name" value="Seryl_tRNA_N"/>
    <property type="match status" value="1"/>
</dbReference>
<dbReference type="Pfam" id="PF00587">
    <property type="entry name" value="tRNA-synt_2b"/>
    <property type="match status" value="1"/>
</dbReference>
<dbReference type="PIRSF" id="PIRSF001529">
    <property type="entry name" value="Ser-tRNA-synth_IIa"/>
    <property type="match status" value="1"/>
</dbReference>
<dbReference type="PRINTS" id="PR00981">
    <property type="entry name" value="TRNASYNTHSER"/>
</dbReference>
<dbReference type="SUPFAM" id="SSF55681">
    <property type="entry name" value="Class II aaRS and biotin synthetases"/>
    <property type="match status" value="1"/>
</dbReference>
<dbReference type="SUPFAM" id="SSF46589">
    <property type="entry name" value="tRNA-binding arm"/>
    <property type="match status" value="1"/>
</dbReference>
<dbReference type="PROSITE" id="PS50862">
    <property type="entry name" value="AA_TRNA_LIGASE_II"/>
    <property type="match status" value="1"/>
</dbReference>